<gene>
    <name evidence="1" type="primary">petG</name>
</gene>
<keyword id="KW-0150">Chloroplast</keyword>
<keyword id="KW-0249">Electron transport</keyword>
<keyword id="KW-0472">Membrane</keyword>
<keyword id="KW-0602">Photosynthesis</keyword>
<keyword id="KW-0934">Plastid</keyword>
<keyword id="KW-0793">Thylakoid</keyword>
<keyword id="KW-0812">Transmembrane</keyword>
<keyword id="KW-1133">Transmembrane helix</keyword>
<keyword id="KW-0813">Transport</keyword>
<reference key="1">
    <citation type="journal article" date="1995" name="Plant Mol. Biol. Rep.">
        <title>Complete nucleotide sequence of the Porphyra purpurea chloroplast genome.</title>
        <authorList>
            <person name="Reith M.E."/>
            <person name="Munholland J."/>
        </authorList>
    </citation>
    <scope>NUCLEOTIDE SEQUENCE [LARGE SCALE GENOMIC DNA]</scope>
    <source>
        <strain>Avonport</strain>
    </source>
</reference>
<protein>
    <recommendedName>
        <fullName evidence="1">Cytochrome b6-f complex subunit 5</fullName>
    </recommendedName>
    <alternativeName>
        <fullName evidence="1">Cytochrome b6-f complex subunit PetG</fullName>
    </alternativeName>
    <alternativeName>
        <fullName evidence="1">Cytochrome b6-f complex subunit V</fullName>
    </alternativeName>
</protein>
<dbReference type="EMBL" id="U38804">
    <property type="protein sequence ID" value="AAC08204.1"/>
    <property type="molecule type" value="Genomic_DNA"/>
</dbReference>
<dbReference type="PIR" id="S73239">
    <property type="entry name" value="S73239"/>
</dbReference>
<dbReference type="RefSeq" id="NP_053928.1">
    <property type="nucleotide sequence ID" value="NC_000925.1"/>
</dbReference>
<dbReference type="SMR" id="P51318"/>
<dbReference type="GeneID" id="809947"/>
<dbReference type="GO" id="GO:0009535">
    <property type="term" value="C:chloroplast thylakoid membrane"/>
    <property type="evidence" value="ECO:0007669"/>
    <property type="project" value="UniProtKB-SubCell"/>
</dbReference>
<dbReference type="GO" id="GO:0009512">
    <property type="term" value="C:cytochrome b6f complex"/>
    <property type="evidence" value="ECO:0007669"/>
    <property type="project" value="InterPro"/>
</dbReference>
<dbReference type="GO" id="GO:0045158">
    <property type="term" value="F:electron transporter, transferring electrons within cytochrome b6/f complex of photosystem II activity"/>
    <property type="evidence" value="ECO:0007669"/>
    <property type="project" value="UniProtKB-UniRule"/>
</dbReference>
<dbReference type="GO" id="GO:0017004">
    <property type="term" value="P:cytochrome complex assembly"/>
    <property type="evidence" value="ECO:0007669"/>
    <property type="project" value="UniProtKB-UniRule"/>
</dbReference>
<dbReference type="GO" id="GO:0015979">
    <property type="term" value="P:photosynthesis"/>
    <property type="evidence" value="ECO:0007669"/>
    <property type="project" value="UniProtKB-KW"/>
</dbReference>
<dbReference type="HAMAP" id="MF_00432">
    <property type="entry name" value="Cytb6_f_PetG"/>
    <property type="match status" value="1"/>
</dbReference>
<dbReference type="InterPro" id="IPR003683">
    <property type="entry name" value="Cyt_6/f_cplx_su5"/>
</dbReference>
<dbReference type="InterPro" id="IPR036099">
    <property type="entry name" value="Cyt_6/f_cplx_su5_sf"/>
</dbReference>
<dbReference type="NCBIfam" id="NF001907">
    <property type="entry name" value="PRK00665.1"/>
    <property type="match status" value="1"/>
</dbReference>
<dbReference type="Pfam" id="PF02529">
    <property type="entry name" value="PetG"/>
    <property type="match status" value="1"/>
</dbReference>
<dbReference type="PIRSF" id="PIRSF000034">
    <property type="entry name" value="Cyt_b6-f_V"/>
    <property type="match status" value="1"/>
</dbReference>
<dbReference type="SUPFAM" id="SSF103446">
    <property type="entry name" value="PetG subunit of the cytochrome b6f complex"/>
    <property type="match status" value="1"/>
</dbReference>
<proteinExistence type="inferred from homology"/>
<comment type="function">
    <text evidence="1">Component of the cytochrome b6-f complex, which mediates electron transfer between photosystem II (PSII) and photosystem I (PSI), cyclic electron flow around PSI, and state transitions. PetG is required for either the stability or assembly of the cytochrome b6-f complex.</text>
</comment>
<comment type="subunit">
    <text evidence="1">The 4 large subunits of the cytochrome b6-f complex are cytochrome b6, subunit IV (17 kDa polypeptide, PetD), cytochrome f and the Rieske protein, while the 4 small subunits are PetG, PetL, PetM and PetN. The complex functions as a dimer.</text>
</comment>
<comment type="subcellular location">
    <subcellularLocation>
        <location evidence="1">Plastid</location>
        <location evidence="1">Chloroplast thylakoid membrane</location>
        <topology evidence="1">Single-pass membrane protein</topology>
    </subcellularLocation>
</comment>
<comment type="similarity">
    <text evidence="1">Belongs to the PetG family.</text>
</comment>
<geneLocation type="chloroplast"/>
<sequence>MVEPLLSGIILGLIPVTLSGLLVAAYLQYQRGNQLGL</sequence>
<accession>P51318</accession>
<organism>
    <name type="scientific">Porphyra purpurea</name>
    <name type="common">Red seaweed</name>
    <name type="synonym">Ulva purpurea</name>
    <dbReference type="NCBI Taxonomy" id="2787"/>
    <lineage>
        <taxon>Eukaryota</taxon>
        <taxon>Rhodophyta</taxon>
        <taxon>Bangiophyceae</taxon>
        <taxon>Bangiales</taxon>
        <taxon>Bangiaceae</taxon>
        <taxon>Porphyra</taxon>
    </lineage>
</organism>
<name>PETG_PORPU</name>
<evidence type="ECO:0000255" key="1">
    <source>
        <dbReference type="HAMAP-Rule" id="MF_00432"/>
    </source>
</evidence>
<feature type="chain" id="PRO_0000216400" description="Cytochrome b6-f complex subunit 5">
    <location>
        <begin position="1"/>
        <end position="37"/>
    </location>
</feature>
<feature type="transmembrane region" description="Helical" evidence="1">
    <location>
        <begin position="5"/>
        <end position="25"/>
    </location>
</feature>